<evidence type="ECO:0000250" key="1"/>
<evidence type="ECO:0000305" key="2"/>
<geneLocation type="chloroplast"/>
<feature type="chain" id="PRO_0000293421" description="Small ribosomal subunit protein uS4c">
    <location>
        <begin position="1"/>
        <end position="201"/>
    </location>
</feature>
<feature type="domain" description="S4 RNA-binding">
    <location>
        <begin position="89"/>
        <end position="152"/>
    </location>
</feature>
<name>RR4_CAPBU</name>
<accession>A4QKJ4</accession>
<keyword id="KW-0150">Chloroplast</keyword>
<keyword id="KW-0934">Plastid</keyword>
<keyword id="KW-0687">Ribonucleoprotein</keyword>
<keyword id="KW-0689">Ribosomal protein</keyword>
<keyword id="KW-0694">RNA-binding</keyword>
<keyword id="KW-0699">rRNA-binding</keyword>
<organism>
    <name type="scientific">Capsella bursa-pastoris</name>
    <name type="common">Shepherd's purse</name>
    <name type="synonym">Thlaspi bursa-pastoris</name>
    <dbReference type="NCBI Taxonomy" id="3719"/>
    <lineage>
        <taxon>Eukaryota</taxon>
        <taxon>Viridiplantae</taxon>
        <taxon>Streptophyta</taxon>
        <taxon>Embryophyta</taxon>
        <taxon>Tracheophyta</taxon>
        <taxon>Spermatophyta</taxon>
        <taxon>Magnoliopsida</taxon>
        <taxon>eudicotyledons</taxon>
        <taxon>Gunneridae</taxon>
        <taxon>Pentapetalae</taxon>
        <taxon>rosids</taxon>
        <taxon>malvids</taxon>
        <taxon>Brassicales</taxon>
        <taxon>Brassicaceae</taxon>
        <taxon>Camelineae</taxon>
        <taxon>Capsella</taxon>
    </lineage>
</organism>
<reference key="1">
    <citation type="submission" date="2007-03" db="EMBL/GenBank/DDBJ databases">
        <title>Sequencing analysis of Capsella bursa-pastoris JO22 chloroplast DNA.</title>
        <authorList>
            <person name="Hosouchi T."/>
            <person name="Tsuruoka H."/>
            <person name="Kotani H."/>
        </authorList>
    </citation>
    <scope>NUCLEOTIDE SEQUENCE [LARGE SCALE GENOMIC DNA]</scope>
</reference>
<comment type="function">
    <text evidence="1">One of the primary rRNA binding proteins, it binds directly to 16S rRNA where it nucleates assembly of the body of the 30S subunit.</text>
</comment>
<comment type="function">
    <text evidence="1">With S5 and S12 plays an important role in translational accuracy.</text>
</comment>
<comment type="subunit">
    <text evidence="1">Part of the 30S ribosomal subunit. Contacts protein S5. The interaction surface between S4 and S5 is involved in control of translational fidelity (By similarity).</text>
</comment>
<comment type="subcellular location">
    <subcellularLocation>
        <location>Plastid</location>
        <location>Chloroplast</location>
    </subcellularLocation>
</comment>
<comment type="similarity">
    <text evidence="2">Belongs to the universal ribosomal protein uS4 family.</text>
</comment>
<protein>
    <recommendedName>
        <fullName evidence="2">Small ribosomal subunit protein uS4c</fullName>
    </recommendedName>
    <alternativeName>
        <fullName>30S ribosomal protein S4, chloroplastic</fullName>
    </alternativeName>
</protein>
<dbReference type="EMBL" id="AP009371">
    <property type="protein sequence ID" value="BAF50199.1"/>
    <property type="molecule type" value="Genomic_DNA"/>
</dbReference>
<dbReference type="RefSeq" id="YP_001123375.1">
    <property type="nucleotide sequence ID" value="NC_009270.1"/>
</dbReference>
<dbReference type="SMR" id="A4QKJ4"/>
<dbReference type="GeneID" id="4961687"/>
<dbReference type="GO" id="GO:0009507">
    <property type="term" value="C:chloroplast"/>
    <property type="evidence" value="ECO:0007669"/>
    <property type="project" value="UniProtKB-SubCell"/>
</dbReference>
<dbReference type="GO" id="GO:0015935">
    <property type="term" value="C:small ribosomal subunit"/>
    <property type="evidence" value="ECO:0007669"/>
    <property type="project" value="InterPro"/>
</dbReference>
<dbReference type="GO" id="GO:0019843">
    <property type="term" value="F:rRNA binding"/>
    <property type="evidence" value="ECO:0007669"/>
    <property type="project" value="UniProtKB-UniRule"/>
</dbReference>
<dbReference type="GO" id="GO:0003735">
    <property type="term" value="F:structural constituent of ribosome"/>
    <property type="evidence" value="ECO:0007669"/>
    <property type="project" value="InterPro"/>
</dbReference>
<dbReference type="GO" id="GO:0042274">
    <property type="term" value="P:ribosomal small subunit biogenesis"/>
    <property type="evidence" value="ECO:0007669"/>
    <property type="project" value="TreeGrafter"/>
</dbReference>
<dbReference type="GO" id="GO:0006412">
    <property type="term" value="P:translation"/>
    <property type="evidence" value="ECO:0007669"/>
    <property type="project" value="UniProtKB-UniRule"/>
</dbReference>
<dbReference type="CDD" id="cd00165">
    <property type="entry name" value="S4"/>
    <property type="match status" value="1"/>
</dbReference>
<dbReference type="FunFam" id="1.10.1050.10:FF:000002">
    <property type="entry name" value="30S ribosomal protein S4, chloroplastic"/>
    <property type="match status" value="1"/>
</dbReference>
<dbReference type="FunFam" id="3.10.290.10:FF:000081">
    <property type="entry name" value="30S ribosomal protein S4, chloroplastic"/>
    <property type="match status" value="1"/>
</dbReference>
<dbReference type="Gene3D" id="1.10.1050.10">
    <property type="entry name" value="Ribosomal Protein S4 Delta 41, Chain A, domain 1"/>
    <property type="match status" value="1"/>
</dbReference>
<dbReference type="Gene3D" id="3.10.290.10">
    <property type="entry name" value="RNA-binding S4 domain"/>
    <property type="match status" value="1"/>
</dbReference>
<dbReference type="HAMAP" id="MF_01306_B">
    <property type="entry name" value="Ribosomal_uS4_B"/>
    <property type="match status" value="1"/>
</dbReference>
<dbReference type="InterPro" id="IPR022801">
    <property type="entry name" value="Ribosomal_uS4"/>
</dbReference>
<dbReference type="InterPro" id="IPR005709">
    <property type="entry name" value="Ribosomal_uS4_bac-type"/>
</dbReference>
<dbReference type="InterPro" id="IPR018079">
    <property type="entry name" value="Ribosomal_uS4_CS"/>
</dbReference>
<dbReference type="InterPro" id="IPR001912">
    <property type="entry name" value="Ribosomal_uS4_N"/>
</dbReference>
<dbReference type="InterPro" id="IPR002942">
    <property type="entry name" value="S4_RNA-bd"/>
</dbReference>
<dbReference type="InterPro" id="IPR036986">
    <property type="entry name" value="S4_RNA-bd_sf"/>
</dbReference>
<dbReference type="NCBIfam" id="NF003717">
    <property type="entry name" value="PRK05327.1"/>
    <property type="match status" value="1"/>
</dbReference>
<dbReference type="NCBIfam" id="TIGR01017">
    <property type="entry name" value="rpsD_bact"/>
    <property type="match status" value="1"/>
</dbReference>
<dbReference type="PANTHER" id="PTHR11831">
    <property type="entry name" value="30S 40S RIBOSOMAL PROTEIN"/>
    <property type="match status" value="1"/>
</dbReference>
<dbReference type="PANTHER" id="PTHR11831:SF4">
    <property type="entry name" value="SMALL RIBOSOMAL SUBUNIT PROTEIN US4M"/>
    <property type="match status" value="1"/>
</dbReference>
<dbReference type="Pfam" id="PF00163">
    <property type="entry name" value="Ribosomal_S4"/>
    <property type="match status" value="1"/>
</dbReference>
<dbReference type="Pfam" id="PF01479">
    <property type="entry name" value="S4"/>
    <property type="match status" value="1"/>
</dbReference>
<dbReference type="SMART" id="SM01390">
    <property type="entry name" value="Ribosomal_S4"/>
    <property type="match status" value="1"/>
</dbReference>
<dbReference type="SMART" id="SM00363">
    <property type="entry name" value="S4"/>
    <property type="match status" value="1"/>
</dbReference>
<dbReference type="SUPFAM" id="SSF55174">
    <property type="entry name" value="Alpha-L RNA-binding motif"/>
    <property type="match status" value="1"/>
</dbReference>
<dbReference type="PROSITE" id="PS00632">
    <property type="entry name" value="RIBOSOMAL_S4"/>
    <property type="match status" value="1"/>
</dbReference>
<dbReference type="PROSITE" id="PS50889">
    <property type="entry name" value="S4"/>
    <property type="match status" value="1"/>
</dbReference>
<sequence length="201" mass="23259">MSRYRGPRFKKIRRLGALPGLTSKRPKAGSDLRNQSRSVKKSQYRIRLEEKQKLRFHYGLTERQLLKYVRIAGKAKGSTGQVLLQLLEMRLDNILFRLGMALTIPQARQLVNHGHILVNGRIVDIPSYRCKPRDIITVKDEQNSRTLVQNLLDSSAPEELPNHLTLHTFQYEGLVNQIIDRKCVGLKINELLVVEYYSRQT</sequence>
<gene>
    <name type="primary">rps4</name>
</gene>
<proteinExistence type="inferred from homology"/>